<name>MTB_DICLA</name>
<organism>
    <name type="scientific">Dicentrarchus labrax</name>
    <name type="common">European seabass</name>
    <name type="synonym">Morone labrax</name>
    <dbReference type="NCBI Taxonomy" id="13489"/>
    <lineage>
        <taxon>Eukaryota</taxon>
        <taxon>Metazoa</taxon>
        <taxon>Chordata</taxon>
        <taxon>Craniata</taxon>
        <taxon>Vertebrata</taxon>
        <taxon>Euteleostomi</taxon>
        <taxon>Actinopterygii</taxon>
        <taxon>Neopterygii</taxon>
        <taxon>Teleostei</taxon>
        <taxon>Neoteleostei</taxon>
        <taxon>Acanthomorphata</taxon>
        <taxon>Eupercaria</taxon>
        <taxon>Moronidae</taxon>
        <taxon>Dicentrarchus</taxon>
    </lineage>
</organism>
<reference key="1">
    <citation type="submission" date="2000-05" db="EMBL/GenBank/DDBJ databases">
        <title>Molecular cloning of metallothionein genes from two important aquaculture fish species: the European seabass (Dicentrarchus labrax) and the striped bass (Morone saxatilis).</title>
        <authorList>
            <person name="Leclerc G.M."/>
            <person name="Leclerc G.J."/>
        </authorList>
    </citation>
    <scope>NUCLEOTIDE SEQUENCE [GENOMIC DNA]</scope>
</reference>
<evidence type="ECO:0000250" key="1"/>
<evidence type="ECO:0000250" key="2">
    <source>
        <dbReference type="UniProtKB" id="P02795"/>
    </source>
</evidence>
<evidence type="ECO:0000250" key="3">
    <source>
        <dbReference type="UniProtKB" id="P62339"/>
    </source>
</evidence>
<evidence type="ECO:0000305" key="4"/>
<feature type="chain" id="PRO_0000197282" description="Metallothionein B">
    <location>
        <begin position="1"/>
        <end position="60"/>
    </location>
</feature>
<feature type="region of interest" description="Beta">
    <location>
        <begin position="1"/>
        <end position="28"/>
    </location>
</feature>
<feature type="region of interest" description="Alpha">
    <location>
        <begin position="29"/>
        <end position="60"/>
    </location>
</feature>
<feature type="binding site" evidence="2">
    <location>
        <position position="4"/>
    </location>
    <ligand>
        <name>a divalent metal cation</name>
        <dbReference type="ChEBI" id="CHEBI:60240"/>
        <label>1</label>
        <note>in cluster B</note>
    </ligand>
</feature>
<feature type="binding site" evidence="2">
    <location>
        <position position="6"/>
    </location>
    <ligand>
        <name>a divalent metal cation</name>
        <dbReference type="ChEBI" id="CHEBI:60240"/>
        <label>1</label>
        <note>in cluster B</note>
    </ligand>
</feature>
<feature type="binding site" evidence="2">
    <location>
        <position position="6"/>
    </location>
    <ligand>
        <name>a divalent metal cation</name>
        <dbReference type="ChEBI" id="CHEBI:60240"/>
        <label>2</label>
        <note>in cluster B</note>
    </ligand>
</feature>
<feature type="binding site" evidence="2">
    <location>
        <position position="12"/>
    </location>
    <ligand>
        <name>a divalent metal cation</name>
        <dbReference type="ChEBI" id="CHEBI:60240"/>
        <label>2</label>
        <note>in cluster B</note>
    </ligand>
</feature>
<feature type="binding site" evidence="2">
    <location>
        <position position="14"/>
    </location>
    <ligand>
        <name>a divalent metal cation</name>
        <dbReference type="ChEBI" id="CHEBI:60240"/>
        <label>2</label>
        <note>in cluster B</note>
    </ligand>
</feature>
<feature type="binding site" evidence="2">
    <location>
        <position position="14"/>
    </location>
    <ligand>
        <name>a divalent metal cation</name>
        <dbReference type="ChEBI" id="CHEBI:60240"/>
        <label>3</label>
        <note>in cluster B</note>
    </ligand>
</feature>
<feature type="binding site" evidence="2">
    <location>
        <position position="18"/>
    </location>
    <ligand>
        <name>a divalent metal cation</name>
        <dbReference type="ChEBI" id="CHEBI:60240"/>
        <label>3</label>
        <note>in cluster B</note>
    </ligand>
</feature>
<feature type="binding site" evidence="2">
    <location>
        <position position="20"/>
    </location>
    <ligand>
        <name>a divalent metal cation</name>
        <dbReference type="ChEBI" id="CHEBI:60240"/>
        <label>1</label>
        <note>in cluster B</note>
    </ligand>
</feature>
<feature type="binding site" evidence="2">
    <location>
        <position position="23"/>
    </location>
    <ligand>
        <name>a divalent metal cation</name>
        <dbReference type="ChEBI" id="CHEBI:60240"/>
        <label>1</label>
        <note>in cluster B</note>
    </ligand>
</feature>
<feature type="binding site" evidence="2">
    <location>
        <position position="23"/>
    </location>
    <ligand>
        <name>a divalent metal cation</name>
        <dbReference type="ChEBI" id="CHEBI:60240"/>
        <label>3</label>
        <note>in cluster B</note>
    </ligand>
</feature>
<feature type="binding site" evidence="2">
    <location>
        <position position="25"/>
    </location>
    <ligand>
        <name>a divalent metal cation</name>
        <dbReference type="ChEBI" id="CHEBI:60240"/>
        <label>2</label>
        <note>in cluster B</note>
    </ligand>
</feature>
<feature type="binding site" evidence="2">
    <location>
        <position position="28"/>
    </location>
    <ligand>
        <name>a divalent metal cation</name>
        <dbReference type="ChEBI" id="CHEBI:60240"/>
        <label>3</label>
        <note>in cluster B</note>
    </ligand>
</feature>
<feature type="binding site" evidence="2">
    <location>
        <position position="32"/>
    </location>
    <ligand>
        <name>a divalent metal cation</name>
        <dbReference type="ChEBI" id="CHEBI:60240"/>
        <label>4</label>
        <note>in cluster A</note>
    </ligand>
</feature>
<feature type="binding site" evidence="2">
    <location>
        <position position="33"/>
    </location>
    <ligand>
        <name>a divalent metal cation</name>
        <dbReference type="ChEBI" id="CHEBI:60240"/>
        <label>4</label>
        <note>in cluster A</note>
    </ligand>
</feature>
<feature type="binding site" evidence="2">
    <location>
        <position position="33"/>
    </location>
    <ligand>
        <name>a divalent metal cation</name>
        <dbReference type="ChEBI" id="CHEBI:60240"/>
        <label>5</label>
        <note>in cluster A</note>
    </ligand>
</feature>
<feature type="binding site" evidence="2">
    <location>
        <position position="35"/>
    </location>
    <ligand>
        <name>a divalent metal cation</name>
        <dbReference type="ChEBI" id="CHEBI:60240"/>
        <label>5</label>
        <note>in cluster A</note>
    </ligand>
</feature>
<feature type="binding site" evidence="2">
    <location>
        <position position="36"/>
    </location>
    <ligand>
        <name>a divalent metal cation</name>
        <dbReference type="ChEBI" id="CHEBI:60240"/>
        <label>5</label>
        <note>in cluster A</note>
    </ligand>
</feature>
<feature type="binding site" evidence="2">
    <location>
        <position position="36"/>
    </location>
    <ligand>
        <name>a divalent metal cation</name>
        <dbReference type="ChEBI" id="CHEBI:60240"/>
        <label>6</label>
        <note>in cluster A</note>
    </ligand>
</feature>
<feature type="binding site" evidence="2">
    <location>
        <position position="40"/>
    </location>
    <ligand>
        <name>a divalent metal cation</name>
        <dbReference type="ChEBI" id="CHEBI:60240"/>
        <label>6</label>
        <note>in cluster A</note>
    </ligand>
</feature>
<feature type="binding site" evidence="2">
    <location>
        <position position="43"/>
    </location>
    <ligand>
        <name>a divalent metal cation</name>
        <dbReference type="ChEBI" id="CHEBI:60240"/>
        <label>4</label>
        <note>in cluster A</note>
    </ligand>
</feature>
<feature type="binding site" evidence="2">
    <location>
        <position position="43"/>
    </location>
    <ligand>
        <name>a divalent metal cation</name>
        <dbReference type="ChEBI" id="CHEBI:60240"/>
        <label>6</label>
        <note>in cluster A</note>
    </ligand>
</feature>
<feature type="binding site" evidence="2">
    <location>
        <position position="47"/>
    </location>
    <ligand>
        <name>a divalent metal cation</name>
        <dbReference type="ChEBI" id="CHEBI:60240"/>
        <label>4</label>
        <note>in cluster A</note>
    </ligand>
</feature>
<feature type="binding site" evidence="2">
    <location>
        <position position="49"/>
    </location>
    <ligand>
        <name>a divalent metal cation</name>
        <dbReference type="ChEBI" id="CHEBI:60240"/>
        <label>5</label>
        <note>in cluster A</note>
    </ligand>
</feature>
<feature type="binding site" evidence="2">
    <location>
        <position position="49"/>
    </location>
    <ligand>
        <name>a divalent metal cation</name>
        <dbReference type="ChEBI" id="CHEBI:60240"/>
        <label>7</label>
        <note>in cluster A</note>
    </ligand>
</feature>
<feature type="binding site" evidence="3">
    <location>
        <position position="54"/>
    </location>
    <ligand>
        <name>a divalent metal cation</name>
        <dbReference type="ChEBI" id="CHEBI:60240"/>
        <label>7</label>
        <note>in cluster A</note>
    </ligand>
</feature>
<feature type="binding site" evidence="2">
    <location>
        <position position="58"/>
    </location>
    <ligand>
        <name>a divalent metal cation</name>
        <dbReference type="ChEBI" id="CHEBI:60240"/>
        <label>7</label>
        <note>in cluster A</note>
    </ligand>
</feature>
<feature type="binding site" evidence="2">
    <location>
        <position position="59"/>
    </location>
    <ligand>
        <name>a divalent metal cation</name>
        <dbReference type="ChEBI" id="CHEBI:60240"/>
        <label>6</label>
        <note>in cluster A</note>
    </ligand>
</feature>
<feature type="binding site" evidence="2">
    <location>
        <position position="59"/>
    </location>
    <ligand>
        <name>a divalent metal cation</name>
        <dbReference type="ChEBI" id="CHEBI:60240"/>
        <label>7</label>
        <note>in cluster A</note>
    </ligand>
</feature>
<keyword id="KW-0479">Metal-binding</keyword>
<keyword id="KW-0480">Metal-thiolate cluster</keyword>
<keyword id="KW-1185">Reference proteome</keyword>
<dbReference type="EMBL" id="AF199014">
    <property type="protein sequence ID" value="AAF22355.2"/>
    <property type="molecule type" value="Genomic_DNA"/>
</dbReference>
<dbReference type="SMR" id="Q9PTG9"/>
<dbReference type="OMA" id="CEDSCKC"/>
<dbReference type="Proteomes" id="UP000694389">
    <property type="component" value="Unplaced"/>
</dbReference>
<dbReference type="GO" id="GO:0046872">
    <property type="term" value="F:metal ion binding"/>
    <property type="evidence" value="ECO:0007669"/>
    <property type="project" value="UniProtKB-KW"/>
</dbReference>
<dbReference type="FunFam" id="4.10.10.10:FF:000001">
    <property type="entry name" value="Metallothionein"/>
    <property type="match status" value="1"/>
</dbReference>
<dbReference type="Gene3D" id="4.10.10.10">
    <property type="entry name" value="Metallothionein Isoform II"/>
    <property type="match status" value="1"/>
</dbReference>
<dbReference type="InterPro" id="IPR017854">
    <property type="entry name" value="Metalthion_dom_sf"/>
</dbReference>
<dbReference type="InterPro" id="IPR023587">
    <property type="entry name" value="Metalthion_dom_sf_vert"/>
</dbReference>
<dbReference type="InterPro" id="IPR000006">
    <property type="entry name" value="Metalthion_vert"/>
</dbReference>
<dbReference type="InterPro" id="IPR018064">
    <property type="entry name" value="Metalthion_vert_metal_BS"/>
</dbReference>
<dbReference type="PANTHER" id="PTHR23299">
    <property type="entry name" value="METALLOTHIONEIN"/>
    <property type="match status" value="1"/>
</dbReference>
<dbReference type="PANTHER" id="PTHR23299:SF24">
    <property type="entry name" value="METALLOTHIONEIN-1X"/>
    <property type="match status" value="1"/>
</dbReference>
<dbReference type="Pfam" id="PF00131">
    <property type="entry name" value="Metallothio"/>
    <property type="match status" value="1"/>
</dbReference>
<dbReference type="PRINTS" id="PR00860">
    <property type="entry name" value="MTVERTEBRATE"/>
</dbReference>
<dbReference type="SUPFAM" id="SSF57868">
    <property type="entry name" value="Metallothionein"/>
    <property type="match status" value="1"/>
</dbReference>
<dbReference type="PROSITE" id="PS00203">
    <property type="entry name" value="METALLOTHIONEIN_VRT"/>
    <property type="match status" value="1"/>
</dbReference>
<accession>Q9PTG9</accession>
<protein>
    <recommendedName>
        <fullName>Metallothionein B</fullName>
        <shortName>MT-B</shortName>
    </recommendedName>
</protein>
<gene>
    <name type="primary">mtb</name>
</gene>
<proteinExistence type="inferred from homology"/>
<sequence>MDPCDCSKSGTCNCGGSCTCTNCSCTTCKKSCCPCCPSGCTKCASGCVCKGKTCDTSCCQ</sequence>
<comment type="function">
    <text evidence="1">Metallothioneins have a high content of cysteine residues that bind various heavy metals.</text>
</comment>
<comment type="domain">
    <text>Class I metallothioneins contain 2 metal-binding domains: four divalent ions are chelated within cluster A of the alpha domain and are coordinated via cysteinyl thiolate bridges to 11 cysteine ligands. Cluster B, the corresponding region within the beta domain, can ligate three divalent ions to 9 cysteines.</text>
</comment>
<comment type="similarity">
    <text evidence="4">Belongs to the metallothionein superfamily. Type 1 family.</text>
</comment>